<accession>Q02H78</accession>
<feature type="chain" id="PRO_1000060880" description="HTH-type transcriptional regulator ArgP">
    <location>
        <begin position="1"/>
        <end position="300"/>
    </location>
</feature>
<feature type="domain" description="HTH lysR-type" evidence="1">
    <location>
        <begin position="4"/>
        <end position="60"/>
    </location>
</feature>
<feature type="DNA-binding region" description="H-T-H motif" evidence="1">
    <location>
        <begin position="21"/>
        <end position="40"/>
    </location>
</feature>
<organism>
    <name type="scientific">Pseudomonas aeruginosa (strain UCBPP-PA14)</name>
    <dbReference type="NCBI Taxonomy" id="208963"/>
    <lineage>
        <taxon>Bacteria</taxon>
        <taxon>Pseudomonadati</taxon>
        <taxon>Pseudomonadota</taxon>
        <taxon>Gammaproteobacteria</taxon>
        <taxon>Pseudomonadales</taxon>
        <taxon>Pseudomonadaceae</taxon>
        <taxon>Pseudomonas</taxon>
    </lineage>
</organism>
<name>ARGP_PSEAB</name>
<proteinExistence type="inferred from homology"/>
<protein>
    <recommendedName>
        <fullName evidence="1">HTH-type transcriptional regulator ArgP</fullName>
    </recommendedName>
</protein>
<sequence>MILFDYKLLAALAAVVEQGGFERAAQALGLSQSAVSQRIKLLEARVGQPVLVRETPPHPTDLGRRLLNHVQQVRLLEGDLQRWVPNLDEGGAPERLRIALNADSLATWWAAAVGDFCAERRVLLDLVVEDQEVGLKRMRAGEVAGCVCGSARPVAGARSLLLGAMRYRGLASPDFIARHFPRGVEAAALAGVPAIVFGPDDLLQHRFLKDLGVEGGFIHHLCPSSEGFVRLTAGGLGWGLVPERQVQGELARGELVELLPGQVIDVPLYWHYWRNGGELLASLTEHLLARAGDGLVRVSG</sequence>
<keyword id="KW-0238">DNA-binding</keyword>
<keyword id="KW-0804">Transcription</keyword>
<keyword id="KW-0805">Transcription regulation</keyword>
<comment type="function">
    <text evidence="1">Controls the transcription of genes involved in arginine and lysine metabolism.</text>
</comment>
<comment type="subunit">
    <text evidence="1">Homodimer.</text>
</comment>
<comment type="similarity">
    <text evidence="2">Belongs to the LysR transcriptional regulatory family.</text>
</comment>
<evidence type="ECO:0000255" key="1">
    <source>
        <dbReference type="HAMAP-Rule" id="MF_00513"/>
    </source>
</evidence>
<evidence type="ECO:0000305" key="2"/>
<dbReference type="EMBL" id="CP000438">
    <property type="protein sequence ID" value="ABJ13633.1"/>
    <property type="molecule type" value="Genomic_DNA"/>
</dbReference>
<dbReference type="RefSeq" id="WP_003120877.1">
    <property type="nucleotide sequence ID" value="NZ_CP034244.1"/>
</dbReference>
<dbReference type="SMR" id="Q02H78"/>
<dbReference type="KEGG" id="pau:PA14_56740"/>
<dbReference type="PseudoCAP" id="PA14_56740"/>
<dbReference type="HOGENOM" id="CLU_063829_0_0_6"/>
<dbReference type="BioCyc" id="PAER208963:G1G74-4778-MONOMER"/>
<dbReference type="Proteomes" id="UP000000653">
    <property type="component" value="Chromosome"/>
</dbReference>
<dbReference type="GO" id="GO:0003677">
    <property type="term" value="F:DNA binding"/>
    <property type="evidence" value="ECO:0007669"/>
    <property type="project" value="UniProtKB-UniRule"/>
</dbReference>
<dbReference type="GO" id="GO:0003700">
    <property type="term" value="F:DNA-binding transcription factor activity"/>
    <property type="evidence" value="ECO:0007669"/>
    <property type="project" value="UniProtKB-UniRule"/>
</dbReference>
<dbReference type="FunFam" id="1.10.10.10:FF:000061">
    <property type="entry name" value="HTH-type transcriptional regulator ArgP"/>
    <property type="match status" value="1"/>
</dbReference>
<dbReference type="Gene3D" id="3.40.190.290">
    <property type="match status" value="1"/>
</dbReference>
<dbReference type="Gene3D" id="1.10.10.10">
    <property type="entry name" value="Winged helix-like DNA-binding domain superfamily/Winged helix DNA-binding domain"/>
    <property type="match status" value="1"/>
</dbReference>
<dbReference type="HAMAP" id="MF_00513">
    <property type="entry name" value="HTH_type_ArgP"/>
    <property type="match status" value="1"/>
</dbReference>
<dbReference type="InterPro" id="IPR017685">
    <property type="entry name" value="ArgP"/>
</dbReference>
<dbReference type="InterPro" id="IPR023490">
    <property type="entry name" value="ArgP_gammaproteobact"/>
</dbReference>
<dbReference type="InterPro" id="IPR050176">
    <property type="entry name" value="LTTR"/>
</dbReference>
<dbReference type="InterPro" id="IPR005119">
    <property type="entry name" value="LysR_subst-bd"/>
</dbReference>
<dbReference type="InterPro" id="IPR000847">
    <property type="entry name" value="Tscrpt_reg_HTH_LysR"/>
</dbReference>
<dbReference type="InterPro" id="IPR036388">
    <property type="entry name" value="WH-like_DNA-bd_sf"/>
</dbReference>
<dbReference type="InterPro" id="IPR036390">
    <property type="entry name" value="WH_DNA-bd_sf"/>
</dbReference>
<dbReference type="NCBIfam" id="TIGR03298">
    <property type="entry name" value="argP"/>
    <property type="match status" value="1"/>
</dbReference>
<dbReference type="NCBIfam" id="NF002964">
    <property type="entry name" value="PRK03635.1"/>
    <property type="match status" value="1"/>
</dbReference>
<dbReference type="NCBIfam" id="NF009888">
    <property type="entry name" value="PRK13348.1"/>
    <property type="match status" value="1"/>
</dbReference>
<dbReference type="PANTHER" id="PTHR30579:SF2">
    <property type="entry name" value="HTH-TYPE TRANSCRIPTIONAL REGULATOR ARGP"/>
    <property type="match status" value="1"/>
</dbReference>
<dbReference type="PANTHER" id="PTHR30579">
    <property type="entry name" value="TRANSCRIPTIONAL REGULATOR"/>
    <property type="match status" value="1"/>
</dbReference>
<dbReference type="Pfam" id="PF00126">
    <property type="entry name" value="HTH_1"/>
    <property type="match status" value="1"/>
</dbReference>
<dbReference type="Pfam" id="PF03466">
    <property type="entry name" value="LysR_substrate"/>
    <property type="match status" value="1"/>
</dbReference>
<dbReference type="PRINTS" id="PR00039">
    <property type="entry name" value="HTHLYSR"/>
</dbReference>
<dbReference type="SUPFAM" id="SSF53850">
    <property type="entry name" value="Periplasmic binding protein-like II"/>
    <property type="match status" value="1"/>
</dbReference>
<dbReference type="SUPFAM" id="SSF46785">
    <property type="entry name" value="Winged helix' DNA-binding domain"/>
    <property type="match status" value="1"/>
</dbReference>
<dbReference type="PROSITE" id="PS50931">
    <property type="entry name" value="HTH_LYSR"/>
    <property type="match status" value="1"/>
</dbReference>
<reference key="1">
    <citation type="journal article" date="2006" name="Genome Biol.">
        <title>Genomic analysis reveals that Pseudomonas aeruginosa virulence is combinatorial.</title>
        <authorList>
            <person name="Lee D.G."/>
            <person name="Urbach J.M."/>
            <person name="Wu G."/>
            <person name="Liberati N.T."/>
            <person name="Feinbaum R.L."/>
            <person name="Miyata S."/>
            <person name="Diggins L.T."/>
            <person name="He J."/>
            <person name="Saucier M."/>
            <person name="Deziel E."/>
            <person name="Friedman L."/>
            <person name="Li L."/>
            <person name="Grills G."/>
            <person name="Montgomery K."/>
            <person name="Kucherlapati R."/>
            <person name="Rahme L.G."/>
            <person name="Ausubel F.M."/>
        </authorList>
    </citation>
    <scope>NUCLEOTIDE SEQUENCE [LARGE SCALE GENOMIC DNA]</scope>
    <source>
        <strain>UCBPP-PA14</strain>
    </source>
</reference>
<gene>
    <name evidence="1" type="primary">argP</name>
    <name type="synonym">iciA</name>
    <name type="ordered locus">PA14_56740</name>
</gene>